<reference key="1">
    <citation type="submission" date="2003-12" db="EMBL/GenBank/DDBJ databases">
        <authorList>
            <consortium name="NIH - Xenopus Gene Collection (XGC) project"/>
        </authorList>
    </citation>
    <scope>NUCLEOTIDE SEQUENCE [LARGE SCALE MRNA]</scope>
    <source>
        <tissue>Embryo</tissue>
        <tissue>Liver</tissue>
    </source>
</reference>
<feature type="chain" id="PRO_0000226966" description="MAP kinase-interacting serine/threonine-protein kinase 2">
    <location>
        <begin position="1"/>
        <end position="467"/>
    </location>
</feature>
<feature type="domain" description="Protein kinase" evidence="2">
    <location>
        <begin position="83"/>
        <end position="367"/>
    </location>
</feature>
<feature type="region of interest" description="Disordered" evidence="4">
    <location>
        <begin position="432"/>
        <end position="467"/>
    </location>
</feature>
<feature type="active site" description="Proton acceptor" evidence="2 3">
    <location>
        <position position="204"/>
    </location>
</feature>
<feature type="binding site" evidence="2">
    <location>
        <begin position="89"/>
        <end position="97"/>
    </location>
    <ligand>
        <name>ATP</name>
        <dbReference type="ChEBI" id="CHEBI:30616"/>
    </ligand>
</feature>
<feature type="binding site" evidence="2">
    <location>
        <position position="112"/>
    </location>
    <ligand>
        <name>ATP</name>
        <dbReference type="ChEBI" id="CHEBI:30616"/>
    </ligand>
</feature>
<feature type="binding site" evidence="1">
    <location>
        <position position="298"/>
    </location>
    <ligand>
        <name>Zn(2+)</name>
        <dbReference type="ChEBI" id="CHEBI:29105"/>
    </ligand>
</feature>
<feature type="binding site" evidence="1">
    <location>
        <position position="310"/>
    </location>
    <ligand>
        <name>Zn(2+)</name>
        <dbReference type="ChEBI" id="CHEBI:29105"/>
    </ligand>
</feature>
<feature type="binding site" evidence="1">
    <location>
        <position position="313"/>
    </location>
    <ligand>
        <name>Zn(2+)</name>
        <dbReference type="ChEBI" id="CHEBI:29105"/>
    </ligand>
</feature>
<name>MKNK2_XENLA</name>
<organism>
    <name type="scientific">Xenopus laevis</name>
    <name type="common">African clawed frog</name>
    <dbReference type="NCBI Taxonomy" id="8355"/>
    <lineage>
        <taxon>Eukaryota</taxon>
        <taxon>Metazoa</taxon>
        <taxon>Chordata</taxon>
        <taxon>Craniata</taxon>
        <taxon>Vertebrata</taxon>
        <taxon>Euteleostomi</taxon>
        <taxon>Amphibia</taxon>
        <taxon>Batrachia</taxon>
        <taxon>Anura</taxon>
        <taxon>Pipoidea</taxon>
        <taxon>Pipidae</taxon>
        <taxon>Xenopodinae</taxon>
        <taxon>Xenopus</taxon>
        <taxon>Xenopus</taxon>
    </lineage>
</organism>
<keyword id="KW-0067">ATP-binding</keyword>
<keyword id="KW-0418">Kinase</keyword>
<keyword id="KW-0460">Magnesium</keyword>
<keyword id="KW-0479">Metal-binding</keyword>
<keyword id="KW-0547">Nucleotide-binding</keyword>
<keyword id="KW-1185">Reference proteome</keyword>
<keyword id="KW-0723">Serine/threonine-protein kinase</keyword>
<keyword id="KW-0808">Transferase</keyword>
<keyword id="KW-0810">Translation regulation</keyword>
<keyword id="KW-0862">Zinc</keyword>
<comment type="function">
    <text evidence="1">May play a role in the response to environmental stress and cytokines. Appears to regulate translation by phosphorylating EIF4E, thus increasing the affinity of this protein for the 7-methylguanosine-containing mRNA cap (By similarity).</text>
</comment>
<comment type="catalytic activity">
    <reaction>
        <text>L-seryl-[protein] + ATP = O-phospho-L-seryl-[protein] + ADP + H(+)</text>
        <dbReference type="Rhea" id="RHEA:17989"/>
        <dbReference type="Rhea" id="RHEA-COMP:9863"/>
        <dbReference type="Rhea" id="RHEA-COMP:11604"/>
        <dbReference type="ChEBI" id="CHEBI:15378"/>
        <dbReference type="ChEBI" id="CHEBI:29999"/>
        <dbReference type="ChEBI" id="CHEBI:30616"/>
        <dbReference type="ChEBI" id="CHEBI:83421"/>
        <dbReference type="ChEBI" id="CHEBI:456216"/>
        <dbReference type="EC" id="2.7.11.1"/>
    </reaction>
</comment>
<comment type="catalytic activity">
    <reaction>
        <text>L-threonyl-[protein] + ATP = O-phospho-L-threonyl-[protein] + ADP + H(+)</text>
        <dbReference type="Rhea" id="RHEA:46608"/>
        <dbReference type="Rhea" id="RHEA-COMP:11060"/>
        <dbReference type="Rhea" id="RHEA-COMP:11605"/>
        <dbReference type="ChEBI" id="CHEBI:15378"/>
        <dbReference type="ChEBI" id="CHEBI:30013"/>
        <dbReference type="ChEBI" id="CHEBI:30616"/>
        <dbReference type="ChEBI" id="CHEBI:61977"/>
        <dbReference type="ChEBI" id="CHEBI:456216"/>
        <dbReference type="EC" id="2.7.11.1"/>
    </reaction>
</comment>
<comment type="cofactor">
    <cofactor evidence="1">
        <name>Mg(2+)</name>
        <dbReference type="ChEBI" id="CHEBI:18420"/>
    </cofactor>
</comment>
<comment type="cofactor">
    <cofactor evidence="1">
        <name>Zn(2+)</name>
        <dbReference type="ChEBI" id="CHEBI:29105"/>
    </cofactor>
    <text evidence="1">Binds 1 zinc ion per subunit.</text>
</comment>
<comment type="similarity">
    <text evidence="5">Belongs to the protein kinase superfamily. CAMK Ser/Thr protein kinase family.</text>
</comment>
<proteinExistence type="evidence at transcript level"/>
<evidence type="ECO:0000250" key="1"/>
<evidence type="ECO:0000255" key="2">
    <source>
        <dbReference type="PROSITE-ProRule" id="PRU00159"/>
    </source>
</evidence>
<evidence type="ECO:0000255" key="3">
    <source>
        <dbReference type="PROSITE-ProRule" id="PRU10027"/>
    </source>
</evidence>
<evidence type="ECO:0000256" key="4">
    <source>
        <dbReference type="SAM" id="MobiDB-lite"/>
    </source>
</evidence>
<evidence type="ECO:0000305" key="5"/>
<protein>
    <recommendedName>
        <fullName>MAP kinase-interacting serine/threonine-protein kinase 2</fullName>
        <ecNumber>2.7.11.1</ecNumber>
    </recommendedName>
    <alternativeName>
        <fullName>MAP kinase signal-integrating kinase 2</fullName>
        <shortName>MAPK signal-integrating kinase 2</shortName>
        <shortName>Mnk2</shortName>
    </alternativeName>
</protein>
<gene>
    <name type="primary">mknk2</name>
</gene>
<accession>Q6P431</accession>
<sequence length="467" mass="52671">MVQKKTTEMKGFHRSFKGQNPFDAAYEMEARNMESVFNFDCPSRPDVPSSAPIDIPDAKKRTKKKKRCRATDSFTGRFDDMYQLQQEILGEGAYAKVQSCINLITNKEYAVKIIEKRPGHSRSRVFREVEMLYQCQGHSNVLELIEFFEEEDKFYLVFEKMCGGSILNHIHRRRHFNEREASFVVRDIAEALNYLHNKGIAHRDLKPENILCESPHQVSPVKICDFDLGSGIKLNSDCSPISTPELLTPCGSAEYMAPEVVEAFNEEASIYDKRCDLWSLGVILYIMLSGYPPFVGHCGSDCGWDRGEACPACQNMLFVSIQEGKYEFPEKDWAHISYGAKDLISKLLLRDAKKRLSAAQVLQHPWVQGNAPYNTLPTPIILQRNSSAKDLTSFAAEAIAMNRQLMEREEEEEGTENSSLCPFVVKATSCSMQLSPPSESKLAKRRQQGSKGGISPPSLAPLLIVSD</sequence>
<dbReference type="EC" id="2.7.11.1"/>
<dbReference type="EMBL" id="BC063717">
    <property type="protein sequence ID" value="AAH63717.1"/>
    <property type="molecule type" value="mRNA"/>
</dbReference>
<dbReference type="EMBL" id="BC077783">
    <property type="protein sequence ID" value="AAH77783.1"/>
    <property type="molecule type" value="mRNA"/>
</dbReference>
<dbReference type="RefSeq" id="NP_001083700.1">
    <property type="nucleotide sequence ID" value="NM_001090231.1"/>
</dbReference>
<dbReference type="SMR" id="Q6P431"/>
<dbReference type="DNASU" id="399068"/>
<dbReference type="GeneID" id="399068"/>
<dbReference type="KEGG" id="xla:399068"/>
<dbReference type="AGR" id="Xenbase:XB-GENE-866072"/>
<dbReference type="CTD" id="399068"/>
<dbReference type="Xenbase" id="XB-GENE-866072">
    <property type="gene designation" value="mknk2.L"/>
</dbReference>
<dbReference type="OMA" id="HGETDFS"/>
<dbReference type="OrthoDB" id="5794026at2759"/>
<dbReference type="Proteomes" id="UP000186698">
    <property type="component" value="Chromosome 1L"/>
</dbReference>
<dbReference type="Bgee" id="399068">
    <property type="expression patterns" value="Expressed in spleen and 19 other cell types or tissues"/>
</dbReference>
<dbReference type="GO" id="GO:0005737">
    <property type="term" value="C:cytoplasm"/>
    <property type="evidence" value="ECO:0000318"/>
    <property type="project" value="GO_Central"/>
</dbReference>
<dbReference type="GO" id="GO:0005634">
    <property type="term" value="C:nucleus"/>
    <property type="evidence" value="ECO:0000318"/>
    <property type="project" value="GO_Central"/>
</dbReference>
<dbReference type="GO" id="GO:0005524">
    <property type="term" value="F:ATP binding"/>
    <property type="evidence" value="ECO:0007669"/>
    <property type="project" value="UniProtKB-KW"/>
</dbReference>
<dbReference type="GO" id="GO:0009931">
    <property type="term" value="F:calcium-dependent protein serine/threonine kinase activity"/>
    <property type="evidence" value="ECO:0000318"/>
    <property type="project" value="GO_Central"/>
</dbReference>
<dbReference type="GO" id="GO:0004683">
    <property type="term" value="F:calcium/calmodulin-dependent protein kinase activity"/>
    <property type="evidence" value="ECO:0000318"/>
    <property type="project" value="GO_Central"/>
</dbReference>
<dbReference type="GO" id="GO:0005516">
    <property type="term" value="F:calmodulin binding"/>
    <property type="evidence" value="ECO:0000318"/>
    <property type="project" value="GO_Central"/>
</dbReference>
<dbReference type="GO" id="GO:0046872">
    <property type="term" value="F:metal ion binding"/>
    <property type="evidence" value="ECO:0007669"/>
    <property type="project" value="UniProtKB-KW"/>
</dbReference>
<dbReference type="GO" id="GO:0106310">
    <property type="term" value="F:protein serine kinase activity"/>
    <property type="evidence" value="ECO:0007669"/>
    <property type="project" value="RHEA"/>
</dbReference>
<dbReference type="GO" id="GO:0035556">
    <property type="term" value="P:intracellular signal transduction"/>
    <property type="evidence" value="ECO:0000318"/>
    <property type="project" value="GO_Central"/>
</dbReference>
<dbReference type="GO" id="GO:0006417">
    <property type="term" value="P:regulation of translation"/>
    <property type="evidence" value="ECO:0007669"/>
    <property type="project" value="UniProtKB-KW"/>
</dbReference>
<dbReference type="CDD" id="cd14173">
    <property type="entry name" value="STKc_Mnk2"/>
    <property type="match status" value="1"/>
</dbReference>
<dbReference type="FunFam" id="1.10.510.10:FF:000119">
    <property type="entry name" value="Putative map kinase-interacting serine/threonine-protein kinase 1"/>
    <property type="match status" value="1"/>
</dbReference>
<dbReference type="FunFam" id="3.30.200.20:FF:000093">
    <property type="entry name" value="Putative map kinase-interacting serine/threonine-protein kinase 1"/>
    <property type="match status" value="1"/>
</dbReference>
<dbReference type="Gene3D" id="3.30.200.20">
    <property type="entry name" value="Phosphorylase Kinase, domain 1"/>
    <property type="match status" value="1"/>
</dbReference>
<dbReference type="Gene3D" id="1.10.510.10">
    <property type="entry name" value="Transferase(Phosphotransferase) domain 1"/>
    <property type="match status" value="1"/>
</dbReference>
<dbReference type="InterPro" id="IPR050205">
    <property type="entry name" value="CDPK_Ser/Thr_kinases"/>
</dbReference>
<dbReference type="InterPro" id="IPR011009">
    <property type="entry name" value="Kinase-like_dom_sf"/>
</dbReference>
<dbReference type="InterPro" id="IPR000719">
    <property type="entry name" value="Prot_kinase_dom"/>
</dbReference>
<dbReference type="InterPro" id="IPR017441">
    <property type="entry name" value="Protein_kinase_ATP_BS"/>
</dbReference>
<dbReference type="InterPro" id="IPR008271">
    <property type="entry name" value="Ser/Thr_kinase_AS"/>
</dbReference>
<dbReference type="PANTHER" id="PTHR24349">
    <property type="entry name" value="SERINE/THREONINE-PROTEIN KINASE"/>
    <property type="match status" value="1"/>
</dbReference>
<dbReference type="Pfam" id="PF00069">
    <property type="entry name" value="Pkinase"/>
    <property type="match status" value="1"/>
</dbReference>
<dbReference type="SMART" id="SM00220">
    <property type="entry name" value="S_TKc"/>
    <property type="match status" value="1"/>
</dbReference>
<dbReference type="SUPFAM" id="SSF56112">
    <property type="entry name" value="Protein kinase-like (PK-like)"/>
    <property type="match status" value="1"/>
</dbReference>
<dbReference type="PROSITE" id="PS00107">
    <property type="entry name" value="PROTEIN_KINASE_ATP"/>
    <property type="match status" value="1"/>
</dbReference>
<dbReference type="PROSITE" id="PS50011">
    <property type="entry name" value="PROTEIN_KINASE_DOM"/>
    <property type="match status" value="1"/>
</dbReference>
<dbReference type="PROSITE" id="PS00108">
    <property type="entry name" value="PROTEIN_KINASE_ST"/>
    <property type="match status" value="1"/>
</dbReference>